<name>NUSG_SYNY3</name>
<protein>
    <recommendedName>
        <fullName evidence="1">Transcription termination/antitermination protein NusG</fullName>
    </recommendedName>
</protein>
<evidence type="ECO:0000255" key="1">
    <source>
        <dbReference type="HAMAP-Rule" id="MF_00948"/>
    </source>
</evidence>
<proteinExistence type="inferred from homology"/>
<organism>
    <name type="scientific">Synechocystis sp. (strain ATCC 27184 / PCC 6803 / Kazusa)</name>
    <dbReference type="NCBI Taxonomy" id="1111708"/>
    <lineage>
        <taxon>Bacteria</taxon>
        <taxon>Bacillati</taxon>
        <taxon>Cyanobacteriota</taxon>
        <taxon>Cyanophyceae</taxon>
        <taxon>Synechococcales</taxon>
        <taxon>Merismopediaceae</taxon>
        <taxon>Synechocystis</taxon>
    </lineage>
</organism>
<reference key="1">
    <citation type="journal article" date="1993" name="Nucleic Acids Res.">
        <title>Sequence of the cyanobacterial tRNA(w) gene in Synechocystis PCC 6803: requirement of enzymatic 3' CCA attachment to the acceptor stem.</title>
        <authorList>
            <person name="Schmidt J."/>
            <person name="Subramanian A.R."/>
        </authorList>
    </citation>
    <scope>NUCLEOTIDE SEQUENCE [GENOMIC DNA]</scope>
</reference>
<reference key="2">
    <citation type="journal article" date="1996" name="DNA Res.">
        <title>Sequence analysis of the genome of the unicellular cyanobacterium Synechocystis sp. strain PCC6803. II. Sequence determination of the entire genome and assignment of potential protein-coding regions.</title>
        <authorList>
            <person name="Kaneko T."/>
            <person name="Sato S."/>
            <person name="Kotani H."/>
            <person name="Tanaka A."/>
            <person name="Asamizu E."/>
            <person name="Nakamura Y."/>
            <person name="Miyajima N."/>
            <person name="Hirosawa M."/>
            <person name="Sugiura M."/>
            <person name="Sasamoto S."/>
            <person name="Kimura T."/>
            <person name="Hosouchi T."/>
            <person name="Matsuno A."/>
            <person name="Muraki A."/>
            <person name="Nakazaki N."/>
            <person name="Naruo K."/>
            <person name="Okumura S."/>
            <person name="Shimpo S."/>
            <person name="Takeuchi C."/>
            <person name="Wada T."/>
            <person name="Watanabe A."/>
            <person name="Yamada M."/>
            <person name="Yasuda M."/>
            <person name="Tabata S."/>
        </authorList>
    </citation>
    <scope>NUCLEOTIDE SEQUENCE [LARGE SCALE GENOMIC DNA]</scope>
    <source>
        <strain>ATCC 27184 / PCC 6803 / Kazusa</strain>
    </source>
</reference>
<reference key="3">
    <citation type="journal article" date="1993" name="J. Biol. Chem.">
        <title>A novel operon organization involving the genes for chorismate synthase (aromatic biosynthesis pathway) and ribosomal GTPase center proteins (L11, L1, L10, L12: rplKAJL) in cyanobacterium Synechocystis PCC 6803.</title>
        <authorList>
            <person name="Schmidt J."/>
            <person name="Bubunenko M."/>
            <person name="Subramanian A.R."/>
        </authorList>
    </citation>
    <scope>NUCLEOTIDE SEQUENCE [GENOMIC DNA] OF 177-205</scope>
</reference>
<sequence length="205" mass="23416">MSFTDDQSPVAEQNKKTPSEGHWFAVQVASGCEKRVKLNLEQRIHTLDVADRILQVEIPKTPIVKIRKDGARVQGEEKIFPGYVLIRMIMDDDAWQVVKNTPHVINFVGSEQKRHYGRGRGHVLPMPLSHGEVERIFRHVDEQEPVVKIDMEIGDHIMVLSGPFKDFEGDVIEVSPERSKLKALLSIFGRETPVELEFTQVEKQN</sequence>
<feature type="chain" id="PRO_0000113964" description="Transcription termination/antitermination protein NusG">
    <location>
        <begin position="1"/>
        <end position="205"/>
    </location>
</feature>
<feature type="domain" description="KOW" evidence="1">
    <location>
        <begin position="154"/>
        <end position="178"/>
    </location>
</feature>
<dbReference type="EMBL" id="X72627">
    <property type="protein sequence ID" value="CAA51202.1"/>
    <property type="molecule type" value="Genomic_DNA"/>
</dbReference>
<dbReference type="EMBL" id="BA000022">
    <property type="protein sequence ID" value="BAA17420.1"/>
    <property type="molecule type" value="Genomic_DNA"/>
</dbReference>
<dbReference type="EMBL" id="X73005">
    <property type="protein sequence ID" value="CAA51490.1"/>
    <property type="molecule type" value="Genomic_DNA"/>
</dbReference>
<dbReference type="PIR" id="S33696">
    <property type="entry name" value="E49316"/>
</dbReference>
<dbReference type="SMR" id="P36265"/>
<dbReference type="FunCoup" id="P36265">
    <property type="interactions" value="472"/>
</dbReference>
<dbReference type="IntAct" id="P36265">
    <property type="interactions" value="2"/>
</dbReference>
<dbReference type="STRING" id="1148.gene:10498283"/>
<dbReference type="PaxDb" id="1148-1652499"/>
<dbReference type="EnsemblBacteria" id="BAA17420">
    <property type="protein sequence ID" value="BAA17420"/>
    <property type="gene ID" value="BAA17420"/>
</dbReference>
<dbReference type="KEGG" id="syn:sll1742"/>
<dbReference type="eggNOG" id="COG0250">
    <property type="taxonomic scope" value="Bacteria"/>
</dbReference>
<dbReference type="InParanoid" id="P36265"/>
<dbReference type="PhylomeDB" id="P36265"/>
<dbReference type="Proteomes" id="UP000001425">
    <property type="component" value="Chromosome"/>
</dbReference>
<dbReference type="GO" id="GO:0005829">
    <property type="term" value="C:cytosol"/>
    <property type="evidence" value="ECO:0000318"/>
    <property type="project" value="GO_Central"/>
</dbReference>
<dbReference type="GO" id="GO:0006353">
    <property type="term" value="P:DNA-templated transcription termination"/>
    <property type="evidence" value="ECO:0007669"/>
    <property type="project" value="UniProtKB-UniRule"/>
</dbReference>
<dbReference type="GO" id="GO:0032784">
    <property type="term" value="P:regulation of DNA-templated transcription elongation"/>
    <property type="evidence" value="ECO:0007669"/>
    <property type="project" value="InterPro"/>
</dbReference>
<dbReference type="GO" id="GO:0031564">
    <property type="term" value="P:transcription antitermination"/>
    <property type="evidence" value="ECO:0007669"/>
    <property type="project" value="UniProtKB-UniRule"/>
</dbReference>
<dbReference type="GO" id="GO:0140673">
    <property type="term" value="P:transcription elongation-coupled chromatin remodeling"/>
    <property type="evidence" value="ECO:0007669"/>
    <property type="project" value="InterPro"/>
</dbReference>
<dbReference type="CDD" id="cd06091">
    <property type="entry name" value="KOW_NusG"/>
    <property type="match status" value="1"/>
</dbReference>
<dbReference type="CDD" id="cd09891">
    <property type="entry name" value="NGN_Bact_1"/>
    <property type="match status" value="1"/>
</dbReference>
<dbReference type="FunFam" id="2.30.30.30:FF:000002">
    <property type="entry name" value="Transcription termination/antitermination factor NusG"/>
    <property type="match status" value="1"/>
</dbReference>
<dbReference type="FunFam" id="3.30.70.940:FF:000006">
    <property type="entry name" value="Transcription termination/antitermination protein NusG"/>
    <property type="match status" value="1"/>
</dbReference>
<dbReference type="Gene3D" id="2.30.30.30">
    <property type="match status" value="1"/>
</dbReference>
<dbReference type="Gene3D" id="3.30.70.940">
    <property type="entry name" value="NusG, N-terminal domain"/>
    <property type="match status" value="1"/>
</dbReference>
<dbReference type="HAMAP" id="MF_00948">
    <property type="entry name" value="NusG"/>
    <property type="match status" value="1"/>
</dbReference>
<dbReference type="InterPro" id="IPR005824">
    <property type="entry name" value="KOW"/>
</dbReference>
<dbReference type="InterPro" id="IPR047050">
    <property type="entry name" value="NGN"/>
</dbReference>
<dbReference type="InterPro" id="IPR006645">
    <property type="entry name" value="NGN-like_dom"/>
</dbReference>
<dbReference type="InterPro" id="IPR036735">
    <property type="entry name" value="NGN_dom_sf"/>
</dbReference>
<dbReference type="InterPro" id="IPR043425">
    <property type="entry name" value="NusG-like"/>
</dbReference>
<dbReference type="InterPro" id="IPR014722">
    <property type="entry name" value="Rib_uL2_dom2"/>
</dbReference>
<dbReference type="InterPro" id="IPR001062">
    <property type="entry name" value="Transcrpt_antiterm_NusG"/>
</dbReference>
<dbReference type="InterPro" id="IPR015869">
    <property type="entry name" value="Transcrpt_antiterm_NusG_bac_CS"/>
</dbReference>
<dbReference type="InterPro" id="IPR008991">
    <property type="entry name" value="Translation_prot_SH3-like_sf"/>
</dbReference>
<dbReference type="NCBIfam" id="TIGR00922">
    <property type="entry name" value="nusG"/>
    <property type="match status" value="1"/>
</dbReference>
<dbReference type="PANTHER" id="PTHR30265">
    <property type="entry name" value="RHO-INTERACTING TRANSCRIPTION TERMINATION FACTOR NUSG"/>
    <property type="match status" value="1"/>
</dbReference>
<dbReference type="PANTHER" id="PTHR30265:SF2">
    <property type="entry name" value="TRANSCRIPTION TERMINATION_ANTITERMINATION PROTEIN NUSG"/>
    <property type="match status" value="1"/>
</dbReference>
<dbReference type="Pfam" id="PF00467">
    <property type="entry name" value="KOW"/>
    <property type="match status" value="1"/>
</dbReference>
<dbReference type="Pfam" id="PF02357">
    <property type="entry name" value="NusG"/>
    <property type="match status" value="1"/>
</dbReference>
<dbReference type="PRINTS" id="PR00338">
    <property type="entry name" value="NUSGTNSCPFCT"/>
</dbReference>
<dbReference type="SMART" id="SM00739">
    <property type="entry name" value="KOW"/>
    <property type="match status" value="1"/>
</dbReference>
<dbReference type="SMART" id="SM00738">
    <property type="entry name" value="NGN"/>
    <property type="match status" value="1"/>
</dbReference>
<dbReference type="SUPFAM" id="SSF82679">
    <property type="entry name" value="N-utilization substance G protein NusG, N-terminal domain"/>
    <property type="match status" value="1"/>
</dbReference>
<dbReference type="SUPFAM" id="SSF50104">
    <property type="entry name" value="Translation proteins SH3-like domain"/>
    <property type="match status" value="1"/>
</dbReference>
<dbReference type="PROSITE" id="PS01014">
    <property type="entry name" value="NUSG"/>
    <property type="match status" value="1"/>
</dbReference>
<accession>P36265</accession>
<gene>
    <name evidence="1" type="primary">nusG</name>
    <name type="ordered locus">sll1742</name>
</gene>
<comment type="function">
    <text evidence="1">Participates in transcription elongation, termination and antitermination.</text>
</comment>
<comment type="similarity">
    <text evidence="1">Belongs to the NusG family.</text>
</comment>
<keyword id="KW-1185">Reference proteome</keyword>
<keyword id="KW-0804">Transcription</keyword>
<keyword id="KW-0889">Transcription antitermination</keyword>
<keyword id="KW-0805">Transcription regulation</keyword>
<keyword id="KW-0806">Transcription termination</keyword>